<reference key="1">
    <citation type="journal article" date="2019" name="Front. Microbiol.">
        <title>A Novel Polysaccharide Depolymerase Encoded by the Phage SH-KP152226 Confers Specific Activity Against Multidrug-Resistant Klebsiella pneumoniae via Biofilm Degradation.</title>
        <authorList>
            <person name="Wu Y."/>
            <person name="Wang R."/>
            <person name="Xu M."/>
            <person name="Liu Y."/>
            <person name="Zhu X."/>
            <person name="Qiu J."/>
            <person name="Liu Q."/>
            <person name="He P."/>
            <person name="Li Q."/>
        </authorList>
    </citation>
    <scope>NUCLEOTIDE SEQUENCE [LARGE SCALE GENOMIC DNA]</scope>
    <scope>FUNCTION</scope>
    <scope>BIOPHYSICOCHEMICAL PROPERTIES</scope>
</reference>
<reference key="2">
    <citation type="journal article" date="2019" name="Front. Microbiol.">
        <title>Modeling the Architecture of Depolymerase-Containing Receptor Binding Proteins in Klebsiella Phages.</title>
        <authorList>
            <person name="Latka A."/>
            <person name="Leiman P.G."/>
            <person name="Drulis-Kawa Z."/>
            <person name="Briers Y."/>
        </authorList>
    </citation>
    <scope>REVIEW</scope>
</reference>
<dbReference type="EMBL" id="MK903728">
    <property type="protein sequence ID" value="QDF14644.1"/>
    <property type="molecule type" value="Genomic_DNA"/>
</dbReference>
<dbReference type="SMR" id="A0A5P1KKQ4"/>
<dbReference type="Proteomes" id="UP000326328">
    <property type="component" value="Genome"/>
</dbReference>
<dbReference type="GO" id="GO:0098015">
    <property type="term" value="C:virus tail"/>
    <property type="evidence" value="ECO:0007669"/>
    <property type="project" value="UniProtKB-KW"/>
</dbReference>
<dbReference type="GO" id="GO:0098671">
    <property type="term" value="P:adhesion receptor-mediated virion attachment to host cell"/>
    <property type="evidence" value="ECO:0007669"/>
    <property type="project" value="UniProtKB-KW"/>
</dbReference>
<dbReference type="GO" id="GO:0098994">
    <property type="term" value="P:symbiont entry into host cell via disruption of host cell envelope"/>
    <property type="evidence" value="ECO:0007669"/>
    <property type="project" value="UniProtKB-KW"/>
</dbReference>
<dbReference type="GO" id="GO:0098996">
    <property type="term" value="P:symbiont entry into host cell via disruption of host cell glycocalyx"/>
    <property type="evidence" value="ECO:0000314"/>
    <property type="project" value="UniProtKB"/>
</dbReference>
<dbReference type="Gene3D" id="2.160.20.10">
    <property type="entry name" value="Single-stranded right-handed beta-helix, Pectin lyase-like"/>
    <property type="match status" value="1"/>
</dbReference>
<dbReference type="InterPro" id="IPR039448">
    <property type="entry name" value="Beta_helix"/>
</dbReference>
<dbReference type="InterPro" id="IPR022441">
    <property type="entry name" value="Para_beta_helix_rpt-2"/>
</dbReference>
<dbReference type="InterPro" id="IPR006626">
    <property type="entry name" value="PbH1"/>
</dbReference>
<dbReference type="InterPro" id="IPR012334">
    <property type="entry name" value="Pectin_lyas_fold"/>
</dbReference>
<dbReference type="InterPro" id="IPR011050">
    <property type="entry name" value="Pectin_lyase_fold/virulence"/>
</dbReference>
<dbReference type="InterPro" id="IPR005604">
    <property type="entry name" value="Phage_T7_tail_fibre-like_N"/>
</dbReference>
<dbReference type="InterPro" id="IPR011049">
    <property type="entry name" value="Serralysin-like_metalloprot_C"/>
</dbReference>
<dbReference type="NCBIfam" id="TIGR03804">
    <property type="entry name" value="para_beta_helix"/>
    <property type="match status" value="1"/>
</dbReference>
<dbReference type="Pfam" id="PF13229">
    <property type="entry name" value="Beta_helix"/>
    <property type="match status" value="1"/>
</dbReference>
<dbReference type="Pfam" id="PF03906">
    <property type="entry name" value="Phage_T7_tail"/>
    <property type="match status" value="1"/>
</dbReference>
<dbReference type="SMART" id="SM00710">
    <property type="entry name" value="PbH1"/>
    <property type="match status" value="8"/>
</dbReference>
<dbReference type="SUPFAM" id="SSF101967">
    <property type="entry name" value="Adhesin YadA, collagen-binding domain"/>
    <property type="match status" value="1"/>
</dbReference>
<dbReference type="SUPFAM" id="SSF51126">
    <property type="entry name" value="Pectin lyase-like"/>
    <property type="match status" value="1"/>
</dbReference>
<name>DEPOL_BPK15</name>
<gene>
    <name evidence="7" type="ORF">SHKP152226_42</name>
</gene>
<evidence type="ECO:0000250" key="1">
    <source>
        <dbReference type="UniProtKB" id="D1L2X0"/>
    </source>
</evidence>
<evidence type="ECO:0000250" key="2">
    <source>
        <dbReference type="UniProtKB" id="P03748"/>
    </source>
</evidence>
<evidence type="ECO:0000269" key="3">
    <source>
    </source>
</evidence>
<evidence type="ECO:0000303" key="4">
    <source>
    </source>
</evidence>
<evidence type="ECO:0000305" key="5"/>
<evidence type="ECO:0000305" key="6">
    <source>
    </source>
</evidence>
<evidence type="ECO:0000312" key="7">
    <source>
        <dbReference type="EMBL" id="QDF14644.1"/>
    </source>
</evidence>
<accession>A0A5P1KKQ4</accession>
<feature type="chain" id="PRO_0000458722" description="Depolymerase, capsule K47-specific">
    <location>
        <begin position="1"/>
        <end position="793"/>
    </location>
</feature>
<sequence length="793" mass="85101">MDQDIKTVIQYPVGATEFDIPFDYLSRKFVRVSLVSDDNRRLLSNITEYRYVSKTRVKLLVETTGFDRVEIRRFTSASERIVDFSDGSVLRASDLNVSQIQSAHIAEEARDAALMAMPQDDAGNLDARNRRIVRLAPGIAGTDAVNKDQLDTTLGEAGGILSDMKDLEGEIHDYIEKFADDTALVRGVAWVYNLGSADGGETVITINKSTRTYAVPYIEVNGSRQEVGYHYSFDLETQQITLATPLKAGDFVMVMTTESQLPVETLLASSVGAASIGTATGETVEERLTRLYGHFVHPETYGAVGDGITDDRVALQRSLDVAYENALNGTGPSTVRWSGDYMVSLNPNSLGVSGELAAGRSALCIRPGVSIEGKGTVRLDPSFTGSQSGAVITNWAGPADDCSIKDIRIYGGKDVATGTGITGILILDSQRVVISDVKVLNSTAGGIYLRKGATEGLYGCSFSKVSGCTVDNAGYIGIQMERPYDNTVIGNTINRCEDNGIDVFGNVNDATVTGIAQSTLITGNNIRDVLNGVFIESCGNTNITGNYIADFRSSGVIYNRINSAANDNSLTSNVLIGASGASAGVSFKNSVGYCTVASNRIQNSDYGIRCVGGGITGLNILPNTMKNIAKTLLFVEARNNGLVKSRMSTQFYEGAQVGGIPSNTSPRGVPHRFPSRLSYIVDIQPFWATEQGTREDNFERAKGTLASITGWGSKCALYDTIVAGDTVVSLNSSSVAVGEYLEINAEVYKVTSVSATYAVVRKWTGSDYTAGDYAAVIISNPSYIIRRVQWGEQ</sequence>
<proteinExistence type="evidence at protein level"/>
<protein>
    <recommendedName>
        <fullName evidence="5">Depolymerase, capsule K47-specific</fullName>
    </recommendedName>
    <alternativeName>
        <fullName evidence="4">Dep42</fullName>
    </alternativeName>
    <alternativeName>
        <fullName evidence="5">Gene product 42</fullName>
        <shortName evidence="5">gp42</shortName>
    </alternativeName>
    <alternativeName>
        <fullName evidence="5">Probable tail spike protein</fullName>
    </alternativeName>
</protein>
<keyword id="KW-1238">Degradation of host capsule during virus entry</keyword>
<keyword id="KW-1235">Degradation of host cell envelope components during virus entry</keyword>
<keyword id="KW-0945">Host-virus interaction</keyword>
<keyword id="KW-1233">Viral attachment to host adhesion receptor</keyword>
<keyword id="KW-1161">Viral attachment to host cell</keyword>
<keyword id="KW-1227">Viral tail protein</keyword>
<keyword id="KW-0946">Virion</keyword>
<keyword id="KW-1160">Virus entry into host cell</keyword>
<organism>
    <name type="scientific">Klebsiella phage SH-KP152226</name>
    <name type="common">Bacteriophage SH-KP152226</name>
    <dbReference type="NCBI Taxonomy" id="2590872"/>
    <lineage>
        <taxon>Viruses</taxon>
        <taxon>Duplodnaviria</taxon>
        <taxon>Heunggongvirae</taxon>
        <taxon>Uroviricota</taxon>
        <taxon>Caudoviricetes</taxon>
        <taxon>Autographiviridae</taxon>
        <taxon>Studiervirinae</taxon>
        <taxon>Przondovirus</taxon>
    </lineage>
</organism>
<comment type="function">
    <text evidence="3 6">Functions as a receptor binding protein (RBP) and probably mediates the attachment to the host capsular exopolysaccharides (Probable). Displays a depolymerase activity that specifically degrades the K47-type polysaccharides of Klebsiella pneumoniae capsule, which allows the phage to reach the host cell membrane and bind the entry receptor (PubMed:31849905).</text>
</comment>
<comment type="biophysicochemical properties">
    <phDependence>
        <text evidence="3">Optimum pH is 6.0.</text>
    </phDependence>
    <temperatureDependence>
        <text evidence="3">Optimum temperature is 25 degrees Celsius.</text>
    </temperatureDependence>
</comment>
<comment type="subunit">
    <text evidence="2">Homotrimer.</text>
</comment>
<comment type="subcellular location">
    <subcellularLocation>
        <location evidence="5">Virion</location>
    </subcellularLocation>
    <text evidence="5">Tail appendage.</text>
</comment>
<comment type="domain">
    <text evidence="1 5">The N-terminus anchors the RBP to the virion (By similarity). The central part and C-terminus probably binds and degrades the host exopolysaccharides (Probable).</text>
</comment>
<comment type="similarity">
    <text evidence="5">In the N-terminal section; belongs to the Teseptimavirus fiber family.</text>
</comment>
<comment type="similarity">
    <text evidence="5">In the C-terminal section; belongs to the K47-specific depolymerase family.</text>
</comment>